<comment type="function">
    <text evidence="1">Key component of the proton channel; it plays a direct role in the translocation of protons across the membrane.</text>
</comment>
<comment type="subunit">
    <text evidence="1">F-type ATPases have 2 components, CF(1) - the catalytic core - and CF(0) - the membrane proton channel. CF(1) has five subunits: alpha(3), beta(3), gamma(1), delta(1), epsilon(1). CF(0) has three main subunits: a(1), b(2) and c(9-12). The alpha and beta chains form an alternating ring which encloses part of the gamma chain. CF(1) is attached to CF(0) by a central stalk formed by the gamma and epsilon chains, while a peripheral stalk is formed by the delta and b chains.</text>
</comment>
<comment type="subcellular location">
    <subcellularLocation>
        <location evidence="1">Cell membrane</location>
        <topology evidence="1">Multi-pass membrane protein</topology>
    </subcellularLocation>
</comment>
<comment type="similarity">
    <text evidence="1">Belongs to the ATPase A chain family.</text>
</comment>
<sequence>MEEAKIPMLKLGPITFNLTLLAVCIVTIAVIFAFVFWASRQMKLKPEGKQTALEYLISFVDGIGEEHLDHNLQKSYSLLLFTIFLFVAVANNLGLFTKLETVNGYNLWTSPTANLAFDLALSLFITLMVHIEGVRRRGLVAHLKRLATPWPMTPMNLLEEFTNFLSLAIRLFGNIFAGEVVTGLIVQLANYRVYWWPIAFLVNMAWTAFSVFISCIQAFVFTKLTATYLGKKVNESEE</sequence>
<feature type="chain" id="PRO_1000145329" description="ATP synthase subunit a">
    <location>
        <begin position="1"/>
        <end position="238"/>
    </location>
</feature>
<feature type="transmembrane region" description="Helical" evidence="1">
    <location>
        <begin position="18"/>
        <end position="38"/>
    </location>
</feature>
<feature type="transmembrane region" description="Helical" evidence="1">
    <location>
        <begin position="76"/>
        <end position="96"/>
    </location>
</feature>
<feature type="transmembrane region" description="Helical" evidence="1">
    <location>
        <begin position="114"/>
        <end position="134"/>
    </location>
</feature>
<feature type="transmembrane region" description="Helical" evidence="1">
    <location>
        <begin position="166"/>
        <end position="186"/>
    </location>
</feature>
<feature type="transmembrane region" description="Helical" evidence="1">
    <location>
        <begin position="193"/>
        <end position="213"/>
    </location>
</feature>
<name>ATP6_STRP8</name>
<gene>
    <name evidence="1" type="primary">atpB</name>
    <name type="ordered locus">spyM18_0813</name>
</gene>
<proteinExistence type="inferred from homology"/>
<dbReference type="EMBL" id="AE009949">
    <property type="protein sequence ID" value="AAL97477.1"/>
    <property type="molecule type" value="Genomic_DNA"/>
</dbReference>
<dbReference type="RefSeq" id="WP_002985244.1">
    <property type="nucleotide sequence ID" value="NC_003485.1"/>
</dbReference>
<dbReference type="SMR" id="Q7CND5"/>
<dbReference type="GeneID" id="69901119"/>
<dbReference type="KEGG" id="spm:spyM18_0813"/>
<dbReference type="HOGENOM" id="CLU_041018_2_3_9"/>
<dbReference type="GO" id="GO:0005886">
    <property type="term" value="C:plasma membrane"/>
    <property type="evidence" value="ECO:0007669"/>
    <property type="project" value="UniProtKB-SubCell"/>
</dbReference>
<dbReference type="GO" id="GO:0045259">
    <property type="term" value="C:proton-transporting ATP synthase complex"/>
    <property type="evidence" value="ECO:0007669"/>
    <property type="project" value="UniProtKB-KW"/>
</dbReference>
<dbReference type="GO" id="GO:0046933">
    <property type="term" value="F:proton-transporting ATP synthase activity, rotational mechanism"/>
    <property type="evidence" value="ECO:0007669"/>
    <property type="project" value="UniProtKB-UniRule"/>
</dbReference>
<dbReference type="GO" id="GO:0042777">
    <property type="term" value="P:proton motive force-driven plasma membrane ATP synthesis"/>
    <property type="evidence" value="ECO:0007669"/>
    <property type="project" value="TreeGrafter"/>
</dbReference>
<dbReference type="CDD" id="cd00310">
    <property type="entry name" value="ATP-synt_Fo_a_6"/>
    <property type="match status" value="1"/>
</dbReference>
<dbReference type="Gene3D" id="1.20.120.220">
    <property type="entry name" value="ATP synthase, F0 complex, subunit A"/>
    <property type="match status" value="1"/>
</dbReference>
<dbReference type="HAMAP" id="MF_01393">
    <property type="entry name" value="ATP_synth_a_bact"/>
    <property type="match status" value="1"/>
</dbReference>
<dbReference type="InterPro" id="IPR045082">
    <property type="entry name" value="ATP_syn_F0_a_bact/chloroplast"/>
</dbReference>
<dbReference type="InterPro" id="IPR000568">
    <property type="entry name" value="ATP_synth_F0_asu"/>
</dbReference>
<dbReference type="InterPro" id="IPR023011">
    <property type="entry name" value="ATP_synth_F0_asu_AS"/>
</dbReference>
<dbReference type="InterPro" id="IPR035908">
    <property type="entry name" value="F0_ATP_A_sf"/>
</dbReference>
<dbReference type="NCBIfam" id="TIGR01131">
    <property type="entry name" value="ATP_synt_6_or_A"/>
    <property type="match status" value="1"/>
</dbReference>
<dbReference type="NCBIfam" id="NF004479">
    <property type="entry name" value="PRK05815.1-4"/>
    <property type="match status" value="1"/>
</dbReference>
<dbReference type="PANTHER" id="PTHR42823">
    <property type="entry name" value="ATP SYNTHASE SUBUNIT A, CHLOROPLASTIC"/>
    <property type="match status" value="1"/>
</dbReference>
<dbReference type="PANTHER" id="PTHR42823:SF3">
    <property type="entry name" value="ATP SYNTHASE SUBUNIT A, CHLOROPLASTIC"/>
    <property type="match status" value="1"/>
</dbReference>
<dbReference type="Pfam" id="PF00119">
    <property type="entry name" value="ATP-synt_A"/>
    <property type="match status" value="1"/>
</dbReference>
<dbReference type="PRINTS" id="PR00123">
    <property type="entry name" value="ATPASEA"/>
</dbReference>
<dbReference type="SUPFAM" id="SSF81336">
    <property type="entry name" value="F1F0 ATP synthase subunit A"/>
    <property type="match status" value="1"/>
</dbReference>
<dbReference type="PROSITE" id="PS00449">
    <property type="entry name" value="ATPASE_A"/>
    <property type="match status" value="1"/>
</dbReference>
<evidence type="ECO:0000255" key="1">
    <source>
        <dbReference type="HAMAP-Rule" id="MF_01393"/>
    </source>
</evidence>
<reference key="1">
    <citation type="journal article" date="2002" name="Proc. Natl. Acad. Sci. U.S.A.">
        <title>Genome sequence and comparative microarray analysis of serotype M18 group A Streptococcus strains associated with acute rheumatic fever outbreaks.</title>
        <authorList>
            <person name="Smoot J.C."/>
            <person name="Barbian K.D."/>
            <person name="Van Gompel J.J."/>
            <person name="Smoot L.M."/>
            <person name="Chaussee M.S."/>
            <person name="Sylva G.L."/>
            <person name="Sturdevant D.E."/>
            <person name="Ricklefs S.M."/>
            <person name="Porcella S.F."/>
            <person name="Parkins L.D."/>
            <person name="Beres S.B."/>
            <person name="Campbell D.S."/>
            <person name="Smith T.M."/>
            <person name="Zhang Q."/>
            <person name="Kapur V."/>
            <person name="Daly J.A."/>
            <person name="Veasy L.G."/>
            <person name="Musser J.M."/>
        </authorList>
    </citation>
    <scope>NUCLEOTIDE SEQUENCE [LARGE SCALE GENOMIC DNA]</scope>
    <source>
        <strain>MGAS8232</strain>
    </source>
</reference>
<organism>
    <name type="scientific">Streptococcus pyogenes serotype M18 (strain MGAS8232)</name>
    <dbReference type="NCBI Taxonomy" id="186103"/>
    <lineage>
        <taxon>Bacteria</taxon>
        <taxon>Bacillati</taxon>
        <taxon>Bacillota</taxon>
        <taxon>Bacilli</taxon>
        <taxon>Lactobacillales</taxon>
        <taxon>Streptococcaceae</taxon>
        <taxon>Streptococcus</taxon>
    </lineage>
</organism>
<accession>Q7CND5</accession>
<keyword id="KW-0066">ATP synthesis</keyword>
<keyword id="KW-1003">Cell membrane</keyword>
<keyword id="KW-0138">CF(0)</keyword>
<keyword id="KW-0375">Hydrogen ion transport</keyword>
<keyword id="KW-0406">Ion transport</keyword>
<keyword id="KW-0472">Membrane</keyword>
<keyword id="KW-0812">Transmembrane</keyword>
<keyword id="KW-1133">Transmembrane helix</keyword>
<keyword id="KW-0813">Transport</keyword>
<protein>
    <recommendedName>
        <fullName evidence="1">ATP synthase subunit a</fullName>
    </recommendedName>
    <alternativeName>
        <fullName evidence="1">ATP synthase F0 sector subunit a</fullName>
    </alternativeName>
    <alternativeName>
        <fullName evidence="1">F-ATPase subunit 6</fullName>
    </alternativeName>
</protein>